<accession>P10996</accession>
<protein>
    <recommendedName>
        <fullName>Nitrogenase iron-molybdenum cofactor biosynthesis protein NifE</fullName>
    </recommendedName>
</protein>
<dbReference type="EMBL" id="AY603957">
    <property type="protein sequence ID" value="AAT37645.1"/>
    <property type="molecule type" value="Genomic_DNA"/>
</dbReference>
<dbReference type="PIR" id="S04079">
    <property type="entry name" value="S04079"/>
</dbReference>
<dbReference type="SMR" id="P10996"/>
<dbReference type="UniPathway" id="UPA00782"/>
<dbReference type="GO" id="GO:0016163">
    <property type="term" value="F:nitrogenase activity"/>
    <property type="evidence" value="ECO:0007669"/>
    <property type="project" value="InterPro"/>
</dbReference>
<dbReference type="GO" id="GO:0009399">
    <property type="term" value="P:nitrogen fixation"/>
    <property type="evidence" value="ECO:0007669"/>
    <property type="project" value="UniProtKB-KW"/>
</dbReference>
<dbReference type="GO" id="GO:0065003">
    <property type="term" value="P:protein-containing complex assembly"/>
    <property type="evidence" value="ECO:0007669"/>
    <property type="project" value="InterPro"/>
</dbReference>
<dbReference type="CDD" id="cd01968">
    <property type="entry name" value="Nitrogenase_NifE_I"/>
    <property type="match status" value="1"/>
</dbReference>
<dbReference type="Gene3D" id="3.40.50.12380">
    <property type="entry name" value="Nitrogenase MoFe cofactor biosynthesis protein NifE, C-terminal"/>
    <property type="match status" value="1"/>
</dbReference>
<dbReference type="Gene3D" id="3.40.50.1980">
    <property type="entry name" value="Nitrogenase molybdenum iron protein domain"/>
    <property type="match status" value="1"/>
</dbReference>
<dbReference type="InterPro" id="IPR000510">
    <property type="entry name" value="Nase/OxRdtase_comp1"/>
</dbReference>
<dbReference type="InterPro" id="IPR000318">
    <property type="entry name" value="Nase_comp1_CS"/>
</dbReference>
<dbReference type="InterPro" id="IPR005973">
    <property type="entry name" value="NifE"/>
</dbReference>
<dbReference type="InterPro" id="IPR049939">
    <property type="entry name" value="NifE-like"/>
</dbReference>
<dbReference type="NCBIfam" id="TIGR01283">
    <property type="entry name" value="nifE"/>
    <property type="match status" value="1"/>
</dbReference>
<dbReference type="PANTHER" id="PTHR42956">
    <property type="entry name" value="NITROGENASE IRON-MOLYBDENUM COFACTOR BIOSYNTHESIS PROTEIN NIFE"/>
    <property type="match status" value="1"/>
</dbReference>
<dbReference type="PANTHER" id="PTHR42956:SF1">
    <property type="entry name" value="NITROGENASE IRON-MOLYBDENUM COFACTOR BIOSYNTHESIS PROTEIN NIFE"/>
    <property type="match status" value="1"/>
</dbReference>
<dbReference type="Pfam" id="PF00148">
    <property type="entry name" value="Oxidored_nitro"/>
    <property type="match status" value="1"/>
</dbReference>
<dbReference type="SUPFAM" id="SSF53807">
    <property type="entry name" value="Helical backbone' metal receptor"/>
    <property type="match status" value="1"/>
</dbReference>
<dbReference type="PROSITE" id="PS00699">
    <property type="entry name" value="NITROGENASE_1_1"/>
    <property type="match status" value="1"/>
</dbReference>
<dbReference type="PROSITE" id="PS00090">
    <property type="entry name" value="NITROGENASE_1_2"/>
    <property type="match status" value="1"/>
</dbReference>
<name>NIFE_CLOPA</name>
<proteinExistence type="inferred from homology"/>
<gene>
    <name type="primary">nifE</name>
</gene>
<feature type="chain" id="PRO_0000153114" description="Nitrogenase iron-molybdenum cofactor biosynthesis protein NifE">
    <location>
        <begin position="1"/>
        <end position="456"/>
    </location>
</feature>
<evidence type="ECO:0000305" key="1"/>
<reference key="1">
    <citation type="journal article" date="1989" name="Nucleic Acids Res.">
        <title>Nucleotide and deduced amino acid sequences of nifE from Clostridium pasteurianum.</title>
        <authorList>
            <person name="Wang S.-Z."/>
            <person name="Chen J.-S."/>
            <person name="Johnson J.L."/>
        </authorList>
    </citation>
    <scope>NUCLEOTIDE SEQUENCE [GENOMIC DNA]</scope>
    <source>
        <strain>ATCC 6013 / DSM 525 / NCIB 9486 / VKM B-1774 / W5</strain>
    </source>
</reference>
<organism>
    <name type="scientific">Clostridium pasteurianum</name>
    <dbReference type="NCBI Taxonomy" id="1501"/>
    <lineage>
        <taxon>Bacteria</taxon>
        <taxon>Bacillati</taxon>
        <taxon>Bacillota</taxon>
        <taxon>Clostridia</taxon>
        <taxon>Eubacteriales</taxon>
        <taxon>Clostridiaceae</taxon>
        <taxon>Clostridium</taxon>
    </lineage>
</organism>
<comment type="function">
    <text>This protein may play a role in the biosynthesis of the prosthetic group of nitrogenase (FeMo cofactor).</text>
</comment>
<comment type="pathway">
    <text>Cofactor biosynthesis; Fe-Mo cofactor biosynthesis.</text>
</comment>
<comment type="similarity">
    <text evidence="1">Belongs to the NifD/NifK/NifE/NifN family.</text>
</comment>
<sequence>MIDYKPVVQKKNLKVIEQREESIYYNKKSEDGGCGGDFKCDTASVSGSVSQRACVYCGARVVLNPITDAYHLVHGPIGCASYTWDIRGSLSSGEEIYRNSFSTDLREKDVIFGGEKKLSAAIDEIVAEKHPKVIFVYSTCIVGVIGDDTDAVCKAAEEKYGIRVIPVKSPGFAGSKSTGYKAACDALMKLMGDKTTDEKIDGINFLGDFNLAGEIWIVTNYLKKFGIDVVAKLTGDSSYDEIMNAPKAKLNIVQCAGSMMYLAKMMEKKFGIPYIKVSFYGVEDTKNSLLKIADILGNEEKVKKAKQFVLEEESKIENELDYYRDRLKGKKAAIFVGGAFKAISLIKQFRNLGMETVMVGTQTGKKDDYEIIESITTEGTVILDDANPYELEKFILEQGADILVGGVKERPLAYKLGIAFCDHNHERKHALSGYVGSLNFAKEIDLTINSPVWDYV</sequence>
<keyword id="KW-0535">Nitrogen fixation</keyword>